<sequence length="536" mass="61462">MALTSFLPAPTQLSQDQLEAEEKARSQRSRQTSLVSSRREPPPYGYRKGWIPRLLEDFGDGGAFPEIHVAQYPLDMGRKKKMSNALAIQVDSEGKIKYDAIARQGQSKDKVIYSKYTDLVPKEVMNADDPDLQRPDEEAIKEITEKTRVALEKSVSQKVAAAMPVRAADKLAPAQYIRYTPSQQGVAFNSGAKQRVIRMVEMQKDPMEPPRFKINKKIPRGPPSPPAPVMHSPSRKVTVKEQQEWKIPPCISNWKNAKGYTIPLDKRLAADGRGLQTVHINENFAKLAEALYIADRKAREAVEMRAQVERKMAQKEKEKHEEKLREMAQKARERRAGIKTHVEKEDGEARERDEIRHDRRKERQHDRNLSRAAPDKRSKLQRNENRDISEVIALGVPNPRTSNEVQYDQRLFNQSKGMDSGFAGGEDEIYNVYDQAWRGGKDMAQSIYRPSKNLDKDMYGDDLEARIKTNRFVPDKEFSGSDRRQRGREGPVQFEEDPFGLDKFLEEAKQHGGSKRPSDSSRPKEHEHEGKKRRKE</sequence>
<reference key="1">
    <citation type="submission" date="2004-11" db="EMBL/GenBank/DDBJ databases">
        <authorList>
            <consortium name="The German cDNA consortium"/>
        </authorList>
    </citation>
    <scope>NUCLEOTIDE SEQUENCE [LARGE SCALE MRNA]</scope>
    <source>
        <tissue>Brain cortex</tissue>
    </source>
</reference>
<proteinExistence type="evidence at transcript level"/>
<name>SNW1_PONAB</name>
<evidence type="ECO:0000250" key="1"/>
<evidence type="ECO:0000250" key="2">
    <source>
        <dbReference type="UniProtKB" id="Q13573"/>
    </source>
</evidence>
<evidence type="ECO:0000250" key="3">
    <source>
        <dbReference type="UniProtKB" id="Q9CSN1"/>
    </source>
</evidence>
<evidence type="ECO:0000256" key="4">
    <source>
        <dbReference type="SAM" id="MobiDB-lite"/>
    </source>
</evidence>
<evidence type="ECO:0000305" key="5"/>
<dbReference type="EMBL" id="CR860041">
    <property type="protein sequence ID" value="CAH92191.1"/>
    <property type="molecule type" value="mRNA"/>
</dbReference>
<dbReference type="RefSeq" id="NP_001127521.1">
    <property type="nucleotide sequence ID" value="NM_001134049.1"/>
</dbReference>
<dbReference type="SMR" id="Q5R7R9"/>
<dbReference type="FunCoup" id="Q5R7R9">
    <property type="interactions" value="3061"/>
</dbReference>
<dbReference type="STRING" id="9601.ENSPPYP00000006859"/>
<dbReference type="GeneID" id="100174597"/>
<dbReference type="KEGG" id="pon:100174597"/>
<dbReference type="CTD" id="22938"/>
<dbReference type="eggNOG" id="KOG2441">
    <property type="taxonomic scope" value="Eukaryota"/>
</dbReference>
<dbReference type="InParanoid" id="Q5R7R9"/>
<dbReference type="OrthoDB" id="666364at2759"/>
<dbReference type="Proteomes" id="UP000001595">
    <property type="component" value="Unplaced"/>
</dbReference>
<dbReference type="GO" id="GO:0016363">
    <property type="term" value="C:nuclear matrix"/>
    <property type="evidence" value="ECO:0000250"/>
    <property type="project" value="UniProtKB"/>
</dbReference>
<dbReference type="GO" id="GO:0005634">
    <property type="term" value="C:nucleus"/>
    <property type="evidence" value="ECO:0000250"/>
    <property type="project" value="UniProtKB"/>
</dbReference>
<dbReference type="GO" id="GO:0071007">
    <property type="term" value="C:U2-type catalytic step 2 spliceosome"/>
    <property type="evidence" value="ECO:0000250"/>
    <property type="project" value="UniProtKB"/>
</dbReference>
<dbReference type="GO" id="GO:0016922">
    <property type="term" value="F:nuclear receptor binding"/>
    <property type="evidence" value="ECO:0000250"/>
    <property type="project" value="UniProtKB"/>
</dbReference>
<dbReference type="GO" id="GO:0042974">
    <property type="term" value="F:nuclear retinoic acid receptor binding"/>
    <property type="evidence" value="ECO:0000250"/>
    <property type="project" value="UniProtKB"/>
</dbReference>
<dbReference type="GO" id="GO:0042809">
    <property type="term" value="F:nuclear vitamin D receptor binding"/>
    <property type="evidence" value="ECO:0000250"/>
    <property type="project" value="UniProtKB"/>
</dbReference>
<dbReference type="GO" id="GO:0046332">
    <property type="term" value="F:SMAD binding"/>
    <property type="evidence" value="ECO:0000250"/>
    <property type="project" value="UniProtKB"/>
</dbReference>
<dbReference type="GO" id="GO:0003713">
    <property type="term" value="F:transcription coactivator activity"/>
    <property type="evidence" value="ECO:0000250"/>
    <property type="project" value="UniProtKB"/>
</dbReference>
<dbReference type="GO" id="GO:0003714">
    <property type="term" value="F:transcription corepressor activity"/>
    <property type="evidence" value="ECO:0000250"/>
    <property type="project" value="UniProtKB"/>
</dbReference>
<dbReference type="GO" id="GO:0042771">
    <property type="term" value="P:intrinsic apoptotic signaling pathway in response to DNA damage by p53 class mediator"/>
    <property type="evidence" value="ECO:0000250"/>
    <property type="project" value="UniProtKB"/>
</dbReference>
<dbReference type="GO" id="GO:0000398">
    <property type="term" value="P:mRNA splicing, via spliceosome"/>
    <property type="evidence" value="ECO:0000250"/>
    <property type="project" value="UniProtKB"/>
</dbReference>
<dbReference type="GO" id="GO:0000122">
    <property type="term" value="P:negative regulation of transcription by RNA polymerase II"/>
    <property type="evidence" value="ECO:0000250"/>
    <property type="project" value="UniProtKB"/>
</dbReference>
<dbReference type="GO" id="GO:0048026">
    <property type="term" value="P:positive regulation of mRNA splicing, via spliceosome"/>
    <property type="evidence" value="ECO:0000250"/>
    <property type="project" value="UniProtKB"/>
</dbReference>
<dbReference type="GO" id="GO:0050769">
    <property type="term" value="P:positive regulation of neurogenesis"/>
    <property type="evidence" value="ECO:0000250"/>
    <property type="project" value="UniProtKB"/>
</dbReference>
<dbReference type="GO" id="GO:0045944">
    <property type="term" value="P:positive regulation of transcription by RNA polymerase II"/>
    <property type="evidence" value="ECO:0000250"/>
    <property type="project" value="UniProtKB"/>
</dbReference>
<dbReference type="GO" id="GO:0030511">
    <property type="term" value="P:positive regulation of transforming growth factor beta receptor signaling pathway"/>
    <property type="evidence" value="ECO:0000250"/>
    <property type="project" value="UniProtKB"/>
</dbReference>
<dbReference type="GO" id="GO:0048385">
    <property type="term" value="P:regulation of retinoic acid receptor signaling pathway"/>
    <property type="evidence" value="ECO:0000250"/>
    <property type="project" value="UniProtKB"/>
</dbReference>
<dbReference type="GO" id="GO:0070562">
    <property type="term" value="P:regulation of vitamin D receptor signaling pathway"/>
    <property type="evidence" value="ECO:0000250"/>
    <property type="project" value="UniProtKB"/>
</dbReference>
<dbReference type="GO" id="GO:0048384">
    <property type="term" value="P:retinoic acid receptor signaling pathway"/>
    <property type="evidence" value="ECO:0000250"/>
    <property type="project" value="UniProtKB"/>
</dbReference>
<dbReference type="InterPro" id="IPR017862">
    <property type="entry name" value="SKI-int_prot_SKIP"/>
</dbReference>
<dbReference type="InterPro" id="IPR004015">
    <property type="entry name" value="SKI-int_prot_SKIP_SNW-dom"/>
</dbReference>
<dbReference type="PANTHER" id="PTHR12096">
    <property type="entry name" value="NUCLEAR PROTEIN SKIP-RELATED"/>
    <property type="match status" value="1"/>
</dbReference>
<dbReference type="Pfam" id="PF02731">
    <property type="entry name" value="SKIP_SNW"/>
    <property type="match status" value="1"/>
</dbReference>
<comment type="function">
    <text evidence="2">Involved in pre-mRNA splicing as component of the spliceosome. As a component of the minor spliceosome, involved in the splicing of U12-type introns in pre-mRNAs (By similarity). Required in the specific splicing of CDKN1A pre-mRNA; the function probably involves the recruitment of U2AF2 to the mRNA. May recruit PPIL1 to the spliceosome. May be involved in cyclin-D1/CCND1 mRNA stability through the SNARP complex which associates with both the 3'end of the CCND1 gene and its mRNA. Involved in transcriptional regulation. Modulates TGF-beta-mediated transcription via association with SMAD proteins, MYOD1-mediated transcription via association with PABPN1, RB1-mediated transcriptional repression, and retinoid-X receptor (RXR)- and vitamin D receptor (VDR)-dependent gene transcription in a cell line-specific manner probably involving coactivators NCOA1 and GRIP1. Is involved in NOTCH1-mediated transcriptional activation. Binds to multimerized forms of Notch intracellular domain (NICD) and is proposed to recruit transcriptional coactivators such as MAML1 to form an intermediate preactivation complex which associates with DNA-bound CBF-1/RBPJ to form a transcriptional activation complex by releasing SNW1 and redundant NOTCH1 NICD.</text>
</comment>
<comment type="subunit">
    <text evidence="2 3">Identified in the spliceosome C complex. Associates with U4/U6-U5 tri-small nuclear ribonucleoproteins (U4/U6-U5 tri-snRNPs). Component of the minor spliceosome, which splices U12-type introns (By similarity). Interacts with SKI, SMAD2,SMAD3, RBPJ, RB1, PABPN1, MAGEA1, SIRT1, FOXN3, U2AF2, PPIL1, DAXX and ATP1B4. Interacts with VDR and RXRA; preferentially associates with VDR:RXRA heterodimers. Interacts with NCOR2. Interacts with MAML1. Interacts with NOTCH1 NICD; the interaction involves multimerized NOTCH1 NICD. Forms a complex with NOTCH1 NICD and MAML1; the association is dissociated by RBPJ. Associates with positive transcription elongation factor b (P-TEFb). Component of the SNARP complex which consists at least of SNIP1, SNW1, THRAP3, BCLAF1 and PNN.</text>
</comment>
<comment type="subcellular location">
    <subcellularLocation>
        <location evidence="2">Nucleus</location>
    </subcellularLocation>
</comment>
<comment type="similarity">
    <text evidence="5">Belongs to the SNW family.</text>
</comment>
<gene>
    <name type="primary">SNW1</name>
    <name type="synonym">SKIIP</name>
</gene>
<accession>Q5R7R9</accession>
<organism>
    <name type="scientific">Pongo abelii</name>
    <name type="common">Sumatran orangutan</name>
    <name type="synonym">Pongo pygmaeus abelii</name>
    <dbReference type="NCBI Taxonomy" id="9601"/>
    <lineage>
        <taxon>Eukaryota</taxon>
        <taxon>Metazoa</taxon>
        <taxon>Chordata</taxon>
        <taxon>Craniata</taxon>
        <taxon>Vertebrata</taxon>
        <taxon>Euteleostomi</taxon>
        <taxon>Mammalia</taxon>
        <taxon>Eutheria</taxon>
        <taxon>Euarchontoglires</taxon>
        <taxon>Primates</taxon>
        <taxon>Haplorrhini</taxon>
        <taxon>Catarrhini</taxon>
        <taxon>Hominidae</taxon>
        <taxon>Pongo</taxon>
    </lineage>
</organism>
<keyword id="KW-0007">Acetylation</keyword>
<keyword id="KW-1017">Isopeptide bond</keyword>
<keyword id="KW-0507">mRNA processing</keyword>
<keyword id="KW-0508">mRNA splicing</keyword>
<keyword id="KW-0539">Nucleus</keyword>
<keyword id="KW-0597">Phosphoprotein</keyword>
<keyword id="KW-1185">Reference proteome</keyword>
<keyword id="KW-0747">Spliceosome</keyword>
<keyword id="KW-0804">Transcription</keyword>
<keyword id="KW-0805">Transcription regulation</keyword>
<keyword id="KW-0832">Ubl conjugation</keyword>
<protein>
    <recommendedName>
        <fullName>SNW domain-containing protein 1</fullName>
    </recommendedName>
    <alternativeName>
        <fullName>Nuclear protein SkiP</fullName>
    </alternativeName>
    <alternativeName>
        <fullName>Ski-interacting protein</fullName>
    </alternativeName>
</protein>
<feature type="initiator methionine" description="Removed" evidence="2">
    <location>
        <position position="1"/>
    </location>
</feature>
<feature type="chain" id="PRO_0000312491" description="SNW domain-containing protein 1">
    <location>
        <begin position="2"/>
        <end position="536"/>
    </location>
</feature>
<feature type="region of interest" description="Disordered" evidence="4">
    <location>
        <begin position="1"/>
        <end position="46"/>
    </location>
</feature>
<feature type="region of interest" description="Interaction with PPIL1" evidence="1">
    <location>
        <begin position="59"/>
        <end position="79"/>
    </location>
</feature>
<feature type="region of interest" description="SNW">
    <location>
        <begin position="174"/>
        <end position="339"/>
    </location>
</feature>
<feature type="region of interest" description="Disordered" evidence="4">
    <location>
        <begin position="209"/>
        <end position="234"/>
    </location>
</feature>
<feature type="region of interest" description="Disordered" evidence="4">
    <location>
        <begin position="311"/>
        <end position="386"/>
    </location>
</feature>
<feature type="region of interest" description="Disordered" evidence="4">
    <location>
        <begin position="469"/>
        <end position="536"/>
    </location>
</feature>
<feature type="compositionally biased region" description="Basic and acidic residues" evidence="4">
    <location>
        <begin position="469"/>
        <end position="489"/>
    </location>
</feature>
<feature type="compositionally biased region" description="Basic and acidic residues" evidence="4">
    <location>
        <begin position="503"/>
        <end position="530"/>
    </location>
</feature>
<feature type="modified residue" description="N-acetylalanine" evidence="2">
    <location>
        <position position="2"/>
    </location>
</feature>
<feature type="modified residue" description="Phosphoserine" evidence="2">
    <location>
        <position position="14"/>
    </location>
</feature>
<feature type="modified residue" description="Phosphoserine" evidence="2">
    <location>
        <position position="182"/>
    </location>
</feature>
<feature type="modified residue" description="Phosphoserine" evidence="2">
    <location>
        <position position="190"/>
    </location>
</feature>
<feature type="modified residue" description="Phosphoserine" evidence="2">
    <location>
        <position position="224"/>
    </location>
</feature>
<feature type="modified residue" description="Phosphoserine" evidence="2">
    <location>
        <position position="232"/>
    </location>
</feature>
<feature type="modified residue" description="Phosphoserine" evidence="2">
    <location>
        <position position="234"/>
    </location>
</feature>
<feature type="modified residue" description="Phosphoserine" evidence="2">
    <location>
        <position position="446"/>
    </location>
</feature>
<feature type="modified residue" description="Phosphoserine" evidence="2">
    <location>
        <position position="479"/>
    </location>
</feature>
<feature type="modified residue" description="Phosphoserine" evidence="2">
    <location>
        <position position="481"/>
    </location>
</feature>
<feature type="cross-link" description="Glycyl lysine isopeptide (Lys-Gly) (interchain with G-Cter in SUMO2)" evidence="2">
    <location>
        <position position="23"/>
    </location>
</feature>
<feature type="cross-link" description="Glycyl lysine isopeptide (Lys-Gly) (interchain with G-Cter in SUMO2)" evidence="2">
    <location>
        <position position="81"/>
    </location>
</feature>
<feature type="cross-link" description="Glycyl lysine isopeptide (Lys-Gly) (interchain with G-Cter in SUMO2)" evidence="2">
    <location>
        <position position="97"/>
    </location>
</feature>
<feature type="cross-link" description="Glycyl lysine isopeptide (Lys-Gly) (interchain with G-Cter in SUMO2)" evidence="2">
    <location>
        <position position="115"/>
    </location>
</feature>
<feature type="cross-link" description="Glycyl lysine isopeptide (Lys-Gly) (interchain with G-Cter in SUMO2)" evidence="2">
    <location>
        <position position="122"/>
    </location>
</feature>
<feature type="cross-link" description="Glycyl lysine isopeptide (Lys-Gly) (interchain with G-Cter in SUMO2)" evidence="2">
    <location>
        <position position="141"/>
    </location>
</feature>
<feature type="cross-link" description="Glycyl lysine isopeptide (Lys-Gly) (interchain with G-Cter in SUMO2)" evidence="2">
    <location>
        <position position="158"/>
    </location>
</feature>
<feature type="cross-link" description="Glycyl lysine isopeptide (Lys-Gly) (interchain with G-Cter in SUMO2)" evidence="2">
    <location>
        <position position="170"/>
    </location>
</feature>
<feature type="cross-link" description="Glycyl lysine isopeptide (Lys-Gly) (interchain with G-Cter in SUMO2)" evidence="2">
    <location>
        <position position="193"/>
    </location>
</feature>
<feature type="cross-link" description="Glycyl lysine isopeptide (Lys-Gly) (interchain with G-Cter in SUMO2)" evidence="2">
    <location>
        <position position="240"/>
    </location>
</feature>
<feature type="cross-link" description="Glycyl lysine isopeptide (Lys-Gly) (interchain with G-Cter in SUMO2)" evidence="2">
    <location>
        <position position="258"/>
    </location>
</feature>
<feature type="cross-link" description="Glycyl lysine isopeptide (Lys-Gly) (interchain with G-Cter in SUMO2)" evidence="2">
    <location>
        <position position="286"/>
    </location>
</feature>
<feature type="cross-link" description="Glycyl lysine isopeptide (Lys-Gly) (interchain with G-Cter in SUMO2)" evidence="2">
    <location>
        <position position="339"/>
    </location>
</feature>
<feature type="cross-link" description="Glycyl lysine isopeptide (Lys-Gly) (interchain with G-Cter in SUMO2)" evidence="2">
    <location>
        <position position="344"/>
    </location>
</feature>
<feature type="cross-link" description="Glycyl lysine isopeptide (Lys-Gly) (interchain with G-Cter in SUMO2)" evidence="2">
    <location>
        <position position="416"/>
    </location>
</feature>
<feature type="cross-link" description="Glycyl lysine isopeptide (Lys-Gly) (interchain with G-Cter in SUMO2)" evidence="2">
    <location>
        <position position="441"/>
    </location>
</feature>
<feature type="cross-link" description="Glycyl lysine isopeptide (Lys-Gly) (interchain with G-Cter in SUMO2)" evidence="2">
    <location>
        <position position="452"/>
    </location>
</feature>
<feature type="cross-link" description="Glycyl lysine isopeptide (Lys-Gly) (interchain with G-Cter in SUMO2)" evidence="2">
    <location>
        <position position="509"/>
    </location>
</feature>